<evidence type="ECO:0000250" key="1"/>
<evidence type="ECO:0000255" key="2"/>
<evidence type="ECO:0000256" key="3">
    <source>
        <dbReference type="SAM" id="MobiDB-lite"/>
    </source>
</evidence>
<evidence type="ECO:0000305" key="4"/>
<keyword id="KW-0325">Glycoprotein</keyword>
<keyword id="KW-1031">Host cell junction</keyword>
<keyword id="KW-1032">Host cell membrane</keyword>
<keyword id="KW-1040">Host Golgi apparatus</keyword>
<keyword id="KW-1043">Host membrane</keyword>
<keyword id="KW-0945">Host-virus interaction</keyword>
<keyword id="KW-0472">Membrane</keyword>
<keyword id="KW-0732">Signal</keyword>
<keyword id="KW-0812">Transmembrane</keyword>
<keyword id="KW-1133">Transmembrane helix</keyword>
<keyword id="KW-0261">Viral envelope protein</keyword>
<keyword id="KW-0899">Viral immunoevasion</keyword>
<keyword id="KW-0946">Virion</keyword>
<organismHost>
    <name type="scientific">Homo sapiens</name>
    <name type="common">Human</name>
    <dbReference type="NCBI Taxonomy" id="9606"/>
</organismHost>
<proteinExistence type="inferred from homology"/>
<protein>
    <recommendedName>
        <fullName>Envelope glycoprotein I</fullName>
        <shortName>gI</shortName>
    </recommendedName>
</protein>
<comment type="function">
    <text>In epithelial cells, the heterodimer gE/gI is required for the cell-to-cell spread of the virus, by sorting nascent virions to cell junctions. Once the virus reaches the cell junctions, virus particles can spread to adjacent cells extremely rapidly through interactions with cellular receptors that accumulate at these junctions. Implicated in basolateral spread in polarized cells. In neuronal cells, gE/gI is essential for the anterograde spread of the infection throughout the host nervous system. Together with US9, the heterodimer gE/gI is involved in the sorting and transport of viral structural components toward axon tips.</text>
</comment>
<comment type="function">
    <text>The heterodimer gE/gI serves as a receptor for the Fc part of human IgG. Dissociation of gE/gI from IgG occurs at acidic pH. May thus be involved in anti-HSV antibodies bipolar bridging, followed by intracellular endocytosis and degradation, thereby interfering with host Ig-mediated immune responses.</text>
</comment>
<comment type="subunit">
    <text evidence="1">Interacts with gE; this interaction enhances the Fc receptor function of gE.</text>
</comment>
<comment type="subcellular location">
    <subcellularLocation>
        <location evidence="1">Virion membrane</location>
        <topology evidence="1">Single-pass membrane protein</topology>
    </subcellularLocation>
    <subcellularLocation>
        <location evidence="4">Host cell membrane</location>
        <topology evidence="4">Single-pass type I membrane protein</topology>
    </subcellularLocation>
    <subcellularLocation>
        <location evidence="1">Host cell junction</location>
    </subcellularLocation>
    <subcellularLocation>
        <location evidence="1">Host Golgi apparatus membrane</location>
        <topology evidence="1">Single-pass type I membrane protein</topology>
    </subcellularLocation>
    <text evidence="1">During virion morphogenesis, this protein probably accumulates in the endosomes and trans-Golgi where secondary envelopment occurs. It is probably transported to the cell surface from where it is endocytosed and directed to the trans-Golgi network (TGN). The heterodimer gE/gI then redistribute to cell junctions to promote cell-cell spread later in the infection (By similarity).</text>
</comment>
<comment type="similarity">
    <text evidence="4">Belongs to the alphaherpesvirinae glycoprotein I family.</text>
</comment>
<feature type="signal peptide" evidence="2">
    <location>
        <begin position="1"/>
        <end position="20"/>
    </location>
</feature>
<feature type="chain" id="PRO_0000115772" description="Envelope glycoprotein I">
    <location>
        <begin position="21"/>
        <end position="372"/>
    </location>
</feature>
<feature type="topological domain" description="Virion surface" evidence="2">
    <location>
        <begin position="21"/>
        <end position="262"/>
    </location>
</feature>
<feature type="transmembrane region" description="Helical" evidence="2">
    <location>
        <begin position="263"/>
        <end position="283"/>
    </location>
</feature>
<feature type="topological domain" description="Intravirion" evidence="2">
    <location>
        <begin position="284"/>
        <end position="372"/>
    </location>
</feature>
<feature type="region of interest" description="Disordered" evidence="3">
    <location>
        <begin position="198"/>
        <end position="252"/>
    </location>
</feature>
<feature type="region of interest" description="Disordered" evidence="3">
    <location>
        <begin position="317"/>
        <end position="372"/>
    </location>
</feature>
<feature type="compositionally biased region" description="Low complexity" evidence="3">
    <location>
        <begin position="201"/>
        <end position="218"/>
    </location>
</feature>
<feature type="compositionally biased region" description="Low complexity" evidence="3">
    <location>
        <begin position="226"/>
        <end position="235"/>
    </location>
</feature>
<feature type="compositionally biased region" description="Low complexity" evidence="3">
    <location>
        <begin position="333"/>
        <end position="343"/>
    </location>
</feature>
<feature type="glycosylation site" description="N-linked (GlcNAc...) asparagine; by host" evidence="2">
    <location>
        <position position="156"/>
    </location>
</feature>
<feature type="glycosylation site" description="N-linked (GlcNAc...) asparagine; by host" evidence="2">
    <location>
        <position position="169"/>
    </location>
</feature>
<feature type="glycosylation site" description="N-linked (GlcNAc...) asparagine; by host" evidence="2">
    <location>
        <position position="175"/>
    </location>
</feature>
<feature type="glycosylation site" description="N-linked (GlcNAc...) asparagine; by host" evidence="2">
    <location>
        <position position="243"/>
    </location>
</feature>
<name>GI_HHV23</name>
<organism>
    <name type="scientific">Human herpesvirus 2 (strain 333)</name>
    <name type="common">HHV-2</name>
    <name type="synonym">Human herpes simplex virus 2</name>
    <dbReference type="NCBI Taxonomy" id="10313"/>
    <lineage>
        <taxon>Viruses</taxon>
        <taxon>Duplodnaviria</taxon>
        <taxon>Heunggongvirae</taxon>
        <taxon>Peploviricota</taxon>
        <taxon>Herviviricetes</taxon>
        <taxon>Herpesvirales</taxon>
        <taxon>Orthoherpesviridae</taxon>
        <taxon>Alphaherpesvirinae</taxon>
        <taxon>Simplexvirus</taxon>
        <taxon>Simplexvirus humanalpha2</taxon>
        <taxon>Human herpesvirus 2</taxon>
    </lineage>
</organism>
<reference key="1">
    <citation type="journal article" date="1986" name="Virology">
        <title>The herpes simplex virus type 2 equivalent of the herpes simplex virus type 1 US7 gene and its flanking sequences.</title>
        <authorList>
            <person name="Hodgman T.C."/>
            <person name="Minson A.C."/>
        </authorList>
    </citation>
    <scope>NUCLEOTIDE SEQUENCE [GENOMIC DNA]</scope>
</reference>
<accession>P06764</accession>
<sequence length="372" mass="39548">MPGRSLQGLAILGLWVCATGLVVRGPTVSLVSDSLVDAGAVGPQGFVEEDLRVFGELHFVGAQVPHTNYYDGIIELFHYPLGNHCPRVVHVVTLTACPRRPAVAFTLCRSTHHAHSPAYPTLELGLARQPLLRVRTATRDYAGLYVLRVWVGSATNASLFVLGVALSANGTFVYNGSDYGSCDPAQLPFSAPRLGPSSVYTPGASRPTPPRTTTSPSSPRDPTPAPGDTGTPAPASGERAPPNSTRSASESRHRLTVAQVIQIAIPASIIAFVFLGSCICFIHRCQRRYRRPRGQIYNPGGVSCAVNEAAMARLGAELRSHPNTPPKPRRRSSSSTTMPSLTSIAEESEPGPVVLLSVSPRPRSGPTAPQEV</sequence>
<gene>
    <name type="primary">gI</name>
    <name type="ORF">US7</name>
</gene>
<dbReference type="EMBL" id="M14886">
    <property type="protein sequence ID" value="AAA45861.1"/>
    <property type="molecule type" value="Genomic_DNA"/>
</dbReference>
<dbReference type="EMBL" id="D00026">
    <property type="protein sequence ID" value="BAA00021.1"/>
    <property type="molecule type" value="Genomic_DNA"/>
</dbReference>
<dbReference type="PIR" id="A05246">
    <property type="entry name" value="QQBE88"/>
</dbReference>
<dbReference type="GlyCosmos" id="P06764">
    <property type="glycosylation" value="4 sites, No reported glycans"/>
</dbReference>
<dbReference type="GO" id="GO:0043657">
    <property type="term" value="C:host cell"/>
    <property type="evidence" value="ECO:0007669"/>
    <property type="project" value="InterPro"/>
</dbReference>
<dbReference type="GO" id="GO:0044178">
    <property type="term" value="C:host cell Golgi membrane"/>
    <property type="evidence" value="ECO:0007669"/>
    <property type="project" value="UniProtKB-SubCell"/>
</dbReference>
<dbReference type="GO" id="GO:0044156">
    <property type="term" value="C:host cell junction"/>
    <property type="evidence" value="ECO:0007669"/>
    <property type="project" value="UniProtKB-SubCell"/>
</dbReference>
<dbReference type="GO" id="GO:0016020">
    <property type="term" value="C:membrane"/>
    <property type="evidence" value="ECO:0007669"/>
    <property type="project" value="UniProtKB-KW"/>
</dbReference>
<dbReference type="GO" id="GO:0019031">
    <property type="term" value="C:viral envelope"/>
    <property type="evidence" value="ECO:0007669"/>
    <property type="project" value="UniProtKB-KW"/>
</dbReference>
<dbReference type="GO" id="GO:0055036">
    <property type="term" value="C:virion membrane"/>
    <property type="evidence" value="ECO:0007669"/>
    <property type="project" value="UniProtKB-SubCell"/>
</dbReference>
<dbReference type="InterPro" id="IPR002874">
    <property type="entry name" value="Herpes_gI"/>
</dbReference>
<dbReference type="Pfam" id="PF01688">
    <property type="entry name" value="Herpes_gI"/>
    <property type="match status" value="1"/>
</dbReference>